<organism>
    <name type="scientific">Danio rerio</name>
    <name type="common">Zebrafish</name>
    <name type="synonym">Brachydanio rerio</name>
    <dbReference type="NCBI Taxonomy" id="7955"/>
    <lineage>
        <taxon>Eukaryota</taxon>
        <taxon>Metazoa</taxon>
        <taxon>Chordata</taxon>
        <taxon>Craniata</taxon>
        <taxon>Vertebrata</taxon>
        <taxon>Euteleostomi</taxon>
        <taxon>Actinopterygii</taxon>
        <taxon>Neopterygii</taxon>
        <taxon>Teleostei</taxon>
        <taxon>Ostariophysi</taxon>
        <taxon>Cypriniformes</taxon>
        <taxon>Danionidae</taxon>
        <taxon>Danioninae</taxon>
        <taxon>Danio</taxon>
    </lineage>
</organism>
<feature type="chain" id="PRO_0000237678" description="Exportin-T">
    <location>
        <begin position="1"/>
        <end position="961"/>
    </location>
</feature>
<accession>Q5SPJ8</accession>
<proteinExistence type="inferred from homology"/>
<sequence length="961" mass="109348">MDEQALMGLNPNADACYRQRALAYFEQLKASLDGWEVCAEALAKGVYSDDHVKFFCFQVLEHQIKFRHGSLSAAQQQLIRETLMKWLQTQLMNVHPEKPFIRNKAAQVFALTFVMEYLTLWPKFFFDVLALVGLNPNGVDIYLRTLMAIDAEVVDRDILHSPEETRRNTLIKDGMREQCIPALVESWFQILQTYQHTHSELTCQCLEVVGAFVSWIDLNLIANDRFVNLLLSHMSMEELREAACDCLFEIVNKGMDPVDKTKLVESLCQVLQSAGFFNVEQEEDVDFLAKFSRLVNGMGQSLVLSWTKLSKTADEKISAETLRAVESKVPLMLQLLIHEDDDISANIVCFCYDYLHVLKQLPALNEQQKSNVEAIMLAVMSKLKYDDEYNFENEGEDEAMFVEYRKQLKMLLDRLAQVSPELLLEAVHRVFNATMQSWQTLQFMEVEVSIRLLYMLGEALPASHGAHFSGDSAKTSTLQAMMRTLVSCGVSEYQHSSVTLEFFETVVRYDKFFLVEPQHIPAVLMAFLDHRGLRHSSPKVRSRVAYLFSRFIKTLHKHMNAFIEDILSRIQDLLELAPPENGFPALLSSDDQLFMFETAGVLIVNGESPAERKQGLMRGLLSPLMEAFRMLLEKLPLEPDEERQTALADCLSHAVGFASRTSKAFSNKQTVKQCGCSEVYLDCLQTFLPALSCPVQRGALRSAVRSFLHRMIICLEEEVLPFIPAASQHMLKDCEARDLQEFIPLISQITAKFKNQVSPFLQEIFMPLVMSIFEVLSRPAEENDQTAALEKQMLRRSYFSFIQTIASSSSSQVMASQGAENIERVLFTIIQGAVDFPDPVAQKTCFIILSRLVELWGGKDGLVGFPDFIYKHIIPACFMAPLKTTFDLSDAQTVLTLSECSLTLHMIHLKRGPECLQFLQEYLPSLHVSPEITQELCQVLQQPDVKVLKNYMKVFFQQAKL</sequence>
<evidence type="ECO:0000250" key="1"/>
<evidence type="ECO:0000305" key="2"/>
<gene>
    <name type="primary">xpot</name>
    <name type="ORF">si:ch211-286m4.4</name>
</gene>
<protein>
    <recommendedName>
        <fullName>Exportin-T</fullName>
    </recommendedName>
    <alternativeName>
        <fullName>Exportin(tRNA)</fullName>
    </alternativeName>
    <alternativeName>
        <fullName>tRNA exportin</fullName>
    </alternativeName>
</protein>
<keyword id="KW-0963">Cytoplasm</keyword>
<keyword id="KW-0539">Nucleus</keyword>
<keyword id="KW-1185">Reference proteome</keyword>
<keyword id="KW-0694">RNA-binding</keyword>
<keyword id="KW-0813">Transport</keyword>
<keyword id="KW-0820">tRNA-binding</keyword>
<comment type="function">
    <text evidence="1">Mediates the nuclear export of aminoacylated tRNAs.</text>
</comment>
<comment type="subcellular location">
    <subcellularLocation>
        <location evidence="1">Cytoplasm</location>
    </subcellularLocation>
    <subcellularLocation>
        <location evidence="1">Nucleus</location>
    </subcellularLocation>
</comment>
<comment type="similarity">
    <text evidence="2">Belongs to the exportin family.</text>
</comment>
<name>XPOT_DANRE</name>
<dbReference type="EMBL" id="AL845512">
    <property type="protein sequence ID" value="CAI12005.1"/>
    <property type="molecule type" value="Genomic_DNA"/>
</dbReference>
<dbReference type="SMR" id="Q5SPJ8"/>
<dbReference type="FunCoup" id="Q5SPJ8">
    <property type="interactions" value="2255"/>
</dbReference>
<dbReference type="STRING" id="7955.ENSDARP00000138742"/>
<dbReference type="PaxDb" id="7955-ENSDARP00000076556"/>
<dbReference type="AGR" id="ZFIN:ZDB-GENE-041210-4"/>
<dbReference type="ZFIN" id="ZDB-GENE-041210-4">
    <property type="gene designation" value="xpot"/>
</dbReference>
<dbReference type="eggNOG" id="KOG2021">
    <property type="taxonomic scope" value="Eukaryota"/>
</dbReference>
<dbReference type="InParanoid" id="Q5SPJ8"/>
<dbReference type="PhylomeDB" id="Q5SPJ8"/>
<dbReference type="PRO" id="PR:Q5SPJ8"/>
<dbReference type="Proteomes" id="UP000000437">
    <property type="component" value="Unplaced"/>
</dbReference>
<dbReference type="GO" id="GO:0005737">
    <property type="term" value="C:cytoplasm"/>
    <property type="evidence" value="ECO:0000318"/>
    <property type="project" value="GO_Central"/>
</dbReference>
<dbReference type="GO" id="GO:0016363">
    <property type="term" value="C:nuclear matrix"/>
    <property type="evidence" value="ECO:0000318"/>
    <property type="project" value="GO_Central"/>
</dbReference>
<dbReference type="GO" id="GO:0005643">
    <property type="term" value="C:nuclear pore"/>
    <property type="evidence" value="ECO:0000318"/>
    <property type="project" value="GO_Central"/>
</dbReference>
<dbReference type="GO" id="GO:0031267">
    <property type="term" value="F:small GTPase binding"/>
    <property type="evidence" value="ECO:0007669"/>
    <property type="project" value="InterPro"/>
</dbReference>
<dbReference type="GO" id="GO:0000049">
    <property type="term" value="F:tRNA binding"/>
    <property type="evidence" value="ECO:0000318"/>
    <property type="project" value="GO_Central"/>
</dbReference>
<dbReference type="GO" id="GO:0071528">
    <property type="term" value="P:tRNA re-export from nucleus"/>
    <property type="evidence" value="ECO:0000318"/>
    <property type="project" value="GO_Central"/>
</dbReference>
<dbReference type="FunFam" id="1.25.10.10:FF:000105">
    <property type="entry name" value="Exportin for tRNA"/>
    <property type="match status" value="1"/>
</dbReference>
<dbReference type="Gene3D" id="1.25.10.10">
    <property type="entry name" value="Leucine-rich Repeat Variant"/>
    <property type="match status" value="1"/>
</dbReference>
<dbReference type="InterPro" id="IPR011989">
    <property type="entry name" value="ARM-like"/>
</dbReference>
<dbReference type="InterPro" id="IPR016024">
    <property type="entry name" value="ARM-type_fold"/>
</dbReference>
<dbReference type="InterPro" id="IPR013598">
    <property type="entry name" value="Exportin-1/Importin-b-like"/>
</dbReference>
<dbReference type="InterPro" id="IPR045546">
    <property type="entry name" value="Exportin-T_C"/>
</dbReference>
<dbReference type="InterPro" id="IPR040017">
    <property type="entry name" value="XPOT"/>
</dbReference>
<dbReference type="PANTHER" id="PTHR15952:SF11">
    <property type="entry name" value="EXPORTIN-T"/>
    <property type="match status" value="1"/>
</dbReference>
<dbReference type="PANTHER" id="PTHR15952">
    <property type="entry name" value="EXPORTIN-T/LOS1"/>
    <property type="match status" value="1"/>
</dbReference>
<dbReference type="Pfam" id="PF19282">
    <property type="entry name" value="Exportin-T"/>
    <property type="match status" value="1"/>
</dbReference>
<dbReference type="Pfam" id="PF08389">
    <property type="entry name" value="Xpo1"/>
    <property type="match status" value="1"/>
</dbReference>
<dbReference type="SUPFAM" id="SSF48371">
    <property type="entry name" value="ARM repeat"/>
    <property type="match status" value="1"/>
</dbReference>
<reference key="1">
    <citation type="journal article" date="2013" name="Nature">
        <title>The zebrafish reference genome sequence and its relationship to the human genome.</title>
        <authorList>
            <person name="Howe K."/>
            <person name="Clark M.D."/>
            <person name="Torroja C.F."/>
            <person name="Torrance J."/>
            <person name="Berthelot C."/>
            <person name="Muffato M."/>
            <person name="Collins J.E."/>
            <person name="Humphray S."/>
            <person name="McLaren K."/>
            <person name="Matthews L."/>
            <person name="McLaren S."/>
            <person name="Sealy I."/>
            <person name="Caccamo M."/>
            <person name="Churcher C."/>
            <person name="Scott C."/>
            <person name="Barrett J.C."/>
            <person name="Koch R."/>
            <person name="Rauch G.J."/>
            <person name="White S."/>
            <person name="Chow W."/>
            <person name="Kilian B."/>
            <person name="Quintais L.T."/>
            <person name="Guerra-Assuncao J.A."/>
            <person name="Zhou Y."/>
            <person name="Gu Y."/>
            <person name="Yen J."/>
            <person name="Vogel J.H."/>
            <person name="Eyre T."/>
            <person name="Redmond S."/>
            <person name="Banerjee R."/>
            <person name="Chi J."/>
            <person name="Fu B."/>
            <person name="Langley E."/>
            <person name="Maguire S.F."/>
            <person name="Laird G.K."/>
            <person name="Lloyd D."/>
            <person name="Kenyon E."/>
            <person name="Donaldson S."/>
            <person name="Sehra H."/>
            <person name="Almeida-King J."/>
            <person name="Loveland J."/>
            <person name="Trevanion S."/>
            <person name="Jones M."/>
            <person name="Quail M."/>
            <person name="Willey D."/>
            <person name="Hunt A."/>
            <person name="Burton J."/>
            <person name="Sims S."/>
            <person name="McLay K."/>
            <person name="Plumb B."/>
            <person name="Davis J."/>
            <person name="Clee C."/>
            <person name="Oliver K."/>
            <person name="Clark R."/>
            <person name="Riddle C."/>
            <person name="Elliot D."/>
            <person name="Threadgold G."/>
            <person name="Harden G."/>
            <person name="Ware D."/>
            <person name="Begum S."/>
            <person name="Mortimore B."/>
            <person name="Kerry G."/>
            <person name="Heath P."/>
            <person name="Phillimore B."/>
            <person name="Tracey A."/>
            <person name="Corby N."/>
            <person name="Dunn M."/>
            <person name="Johnson C."/>
            <person name="Wood J."/>
            <person name="Clark S."/>
            <person name="Pelan S."/>
            <person name="Griffiths G."/>
            <person name="Smith M."/>
            <person name="Glithero R."/>
            <person name="Howden P."/>
            <person name="Barker N."/>
            <person name="Lloyd C."/>
            <person name="Stevens C."/>
            <person name="Harley J."/>
            <person name="Holt K."/>
            <person name="Panagiotidis G."/>
            <person name="Lovell J."/>
            <person name="Beasley H."/>
            <person name="Henderson C."/>
            <person name="Gordon D."/>
            <person name="Auger K."/>
            <person name="Wright D."/>
            <person name="Collins J."/>
            <person name="Raisen C."/>
            <person name="Dyer L."/>
            <person name="Leung K."/>
            <person name="Robertson L."/>
            <person name="Ambridge K."/>
            <person name="Leongamornlert D."/>
            <person name="McGuire S."/>
            <person name="Gilderthorp R."/>
            <person name="Griffiths C."/>
            <person name="Manthravadi D."/>
            <person name="Nichol S."/>
            <person name="Barker G."/>
            <person name="Whitehead S."/>
            <person name="Kay M."/>
            <person name="Brown J."/>
            <person name="Murnane C."/>
            <person name="Gray E."/>
            <person name="Humphries M."/>
            <person name="Sycamore N."/>
            <person name="Barker D."/>
            <person name="Saunders D."/>
            <person name="Wallis J."/>
            <person name="Babbage A."/>
            <person name="Hammond S."/>
            <person name="Mashreghi-Mohammadi M."/>
            <person name="Barr L."/>
            <person name="Martin S."/>
            <person name="Wray P."/>
            <person name="Ellington A."/>
            <person name="Matthews N."/>
            <person name="Ellwood M."/>
            <person name="Woodmansey R."/>
            <person name="Clark G."/>
            <person name="Cooper J."/>
            <person name="Tromans A."/>
            <person name="Grafham D."/>
            <person name="Skuce C."/>
            <person name="Pandian R."/>
            <person name="Andrews R."/>
            <person name="Harrison E."/>
            <person name="Kimberley A."/>
            <person name="Garnett J."/>
            <person name="Fosker N."/>
            <person name="Hall R."/>
            <person name="Garner P."/>
            <person name="Kelly D."/>
            <person name="Bird C."/>
            <person name="Palmer S."/>
            <person name="Gehring I."/>
            <person name="Berger A."/>
            <person name="Dooley C.M."/>
            <person name="Ersan-Urun Z."/>
            <person name="Eser C."/>
            <person name="Geiger H."/>
            <person name="Geisler M."/>
            <person name="Karotki L."/>
            <person name="Kirn A."/>
            <person name="Konantz J."/>
            <person name="Konantz M."/>
            <person name="Oberlander M."/>
            <person name="Rudolph-Geiger S."/>
            <person name="Teucke M."/>
            <person name="Lanz C."/>
            <person name="Raddatz G."/>
            <person name="Osoegawa K."/>
            <person name="Zhu B."/>
            <person name="Rapp A."/>
            <person name="Widaa S."/>
            <person name="Langford C."/>
            <person name="Yang F."/>
            <person name="Schuster S.C."/>
            <person name="Carter N.P."/>
            <person name="Harrow J."/>
            <person name="Ning Z."/>
            <person name="Herrero J."/>
            <person name="Searle S.M."/>
            <person name="Enright A."/>
            <person name="Geisler R."/>
            <person name="Plasterk R.H."/>
            <person name="Lee C."/>
            <person name="Westerfield M."/>
            <person name="de Jong P.J."/>
            <person name="Zon L.I."/>
            <person name="Postlethwait J.H."/>
            <person name="Nusslein-Volhard C."/>
            <person name="Hubbard T.J."/>
            <person name="Roest Crollius H."/>
            <person name="Rogers J."/>
            <person name="Stemple D.L."/>
        </authorList>
    </citation>
    <scope>NUCLEOTIDE SEQUENCE [LARGE SCALE GENOMIC DNA]</scope>
    <source>
        <strain>Tuebingen</strain>
    </source>
</reference>